<feature type="chain" id="PRO_0000056438" description="Aldehyde dehydrogenase">
    <location>
        <begin position="1"/>
        <end position="497"/>
    </location>
</feature>
<feature type="active site" description="Proton acceptor" evidence="2 3">
    <location>
        <position position="264"/>
    </location>
</feature>
<feature type="active site" description="Nucleophile" evidence="2 3">
    <location>
        <position position="298"/>
    </location>
</feature>
<feature type="binding site" evidence="1">
    <location>
        <begin position="241"/>
        <end position="246"/>
    </location>
    <ligand>
        <name>NAD(+)</name>
        <dbReference type="ChEBI" id="CHEBI:57540"/>
    </ligand>
</feature>
<feature type="site" description="Transition state stabilizer" evidence="1">
    <location>
        <position position="165"/>
    </location>
</feature>
<feature type="sequence conflict" description="In Ref. 1; AAA33293." evidence="4" ref="1">
    <original>E</original>
    <variation>Q</variation>
    <location>
        <position position="191"/>
    </location>
</feature>
<feature type="sequence conflict" description="In Ref. 1; AAA33293." evidence="4" ref="1">
    <original>G</original>
    <variation>P</variation>
    <location>
        <position position="208"/>
    </location>
</feature>
<feature type="sequence conflict" description="In Ref. 1; AAA33293." evidence="4" ref="1">
    <original>R</original>
    <variation>P</variation>
    <location>
        <position position="247"/>
    </location>
</feature>
<feature type="sequence conflict" description="In Ref. 1; AAA33293." evidence="4" ref="1">
    <original>E</original>
    <variation>V</variation>
    <location>
        <position position="409"/>
    </location>
</feature>
<sequence>MSDLFTTIETPVIKYEQPLGLFINNEFVKGVEGKTFQVINPSNEKVITSVHEATEKDVDVAVAAARAAFEGPWRQVTPSERGILINKLADLMERDIDTLAAIESLDNGKAFTMAKVDLANSIGCLRYYAGWADKIHGQTIDTNPETLTYTRHEPVGVCGQIIPWNFPLLMWSWKIGPAVAAGNTVVLKTAEQTPLSALYAAKLIKEAGFPAGVINVISGFGRTAGAAISSHMDIDKVAFTGSTLVGRTILQAAAKSNLKKVTLELGGKSPNIVFDDADIDNAISWANFGIFFNHGQCCCAGSRILVQEGIYDKFVARFKERAQKNKVGNPFEQDTFQGPQVSQLQFDRIMEYINHGKKAGATVATGGDRHGNEGYFIQPTVFTDVTSDMKIAQEEIFGPVVTIQKFKDEAEAIKIGNSTDYGLAAAVHTKNVNTAIRVSNALKAGTVWINNYNMISYQAPFGGFKQSGLGRELGSYALENYTQIKTVHYRLGDALFA</sequence>
<evidence type="ECO:0000250" key="1"/>
<evidence type="ECO:0000255" key="2">
    <source>
        <dbReference type="PROSITE-ProRule" id="PRU10007"/>
    </source>
</evidence>
<evidence type="ECO:0000255" key="3">
    <source>
        <dbReference type="PROSITE-ProRule" id="PRU10008"/>
    </source>
</evidence>
<evidence type="ECO:0000305" key="4"/>
<name>ALDH_EMENI</name>
<organism>
    <name type="scientific">Emericella nidulans (strain FGSC A4 / ATCC 38163 / CBS 112.46 / NRRL 194 / M139)</name>
    <name type="common">Aspergillus nidulans</name>
    <dbReference type="NCBI Taxonomy" id="227321"/>
    <lineage>
        <taxon>Eukaryota</taxon>
        <taxon>Fungi</taxon>
        <taxon>Dikarya</taxon>
        <taxon>Ascomycota</taxon>
        <taxon>Pezizomycotina</taxon>
        <taxon>Eurotiomycetes</taxon>
        <taxon>Eurotiomycetidae</taxon>
        <taxon>Eurotiales</taxon>
        <taxon>Aspergillaceae</taxon>
        <taxon>Aspergillus</taxon>
        <taxon>Aspergillus subgen. Nidulantes</taxon>
    </lineage>
</organism>
<protein>
    <recommendedName>
        <fullName>Aldehyde dehydrogenase</fullName>
        <shortName>ALDDH</shortName>
        <shortName>ALDH</shortName>
        <ecNumber>1.2.1.3</ecNumber>
    </recommendedName>
</protein>
<accession>P08157</accession>
<accession>C8VSL3</accession>
<accession>Q5BFX6</accession>
<accession>Q9C1Q6</accession>
<dbReference type="EC" id="1.2.1.3"/>
<dbReference type="EMBL" id="M16197">
    <property type="protein sequence ID" value="AAA33293.1"/>
    <property type="molecule type" value="Genomic_DNA"/>
</dbReference>
<dbReference type="EMBL" id="AF260123">
    <property type="protein sequence ID" value="AAK18072.1"/>
    <property type="molecule type" value="Genomic_DNA"/>
</dbReference>
<dbReference type="EMBL" id="AACD01000007">
    <property type="protein sequence ID" value="EAA66653.1"/>
    <property type="molecule type" value="Genomic_DNA"/>
</dbReference>
<dbReference type="EMBL" id="BN001308">
    <property type="protein sequence ID" value="CBF89245.1"/>
    <property type="molecule type" value="Genomic_DNA"/>
</dbReference>
<dbReference type="PIR" id="A29055">
    <property type="entry name" value="A29055"/>
</dbReference>
<dbReference type="RefSeq" id="XP_658158.1">
    <property type="nucleotide sequence ID" value="XM_653066.1"/>
</dbReference>
<dbReference type="SMR" id="P08157"/>
<dbReference type="BioGRID" id="1957104">
    <property type="interactions" value="1"/>
</dbReference>
<dbReference type="FunCoup" id="P08157">
    <property type="interactions" value="892"/>
</dbReference>
<dbReference type="STRING" id="227321.P08157"/>
<dbReference type="EnsemblFungi" id="CBF89245">
    <property type="protein sequence ID" value="CBF89245"/>
    <property type="gene ID" value="ANIA_00554"/>
</dbReference>
<dbReference type="KEGG" id="ani:ANIA_00554"/>
<dbReference type="VEuPathDB" id="FungiDB:AN0554"/>
<dbReference type="eggNOG" id="KOG2450">
    <property type="taxonomic scope" value="Eukaryota"/>
</dbReference>
<dbReference type="HOGENOM" id="CLU_005391_0_0_1"/>
<dbReference type="InParanoid" id="P08157"/>
<dbReference type="OMA" id="WSNTFNK"/>
<dbReference type="OrthoDB" id="310895at2759"/>
<dbReference type="UniPathway" id="UPA00780">
    <property type="reaction ID" value="UER00768"/>
</dbReference>
<dbReference type="Proteomes" id="UP000000560">
    <property type="component" value="Chromosome VIII"/>
</dbReference>
<dbReference type="GO" id="GO:0005576">
    <property type="term" value="C:extracellular region"/>
    <property type="evidence" value="ECO:0000314"/>
    <property type="project" value="AspGD"/>
</dbReference>
<dbReference type="GO" id="GO:0004029">
    <property type="term" value="F:aldehyde dehydrogenase (NAD+) activity"/>
    <property type="evidence" value="ECO:0000315"/>
    <property type="project" value="AspGD"/>
</dbReference>
<dbReference type="GO" id="GO:0004030">
    <property type="term" value="F:aldehyde dehydrogenase [NAD(P)+] activity"/>
    <property type="evidence" value="ECO:0000315"/>
    <property type="project" value="AspGD"/>
</dbReference>
<dbReference type="GO" id="GO:0046187">
    <property type="term" value="P:acetaldehyde catabolic process"/>
    <property type="evidence" value="ECO:0000315"/>
    <property type="project" value="AspGD"/>
</dbReference>
<dbReference type="GO" id="GO:0019413">
    <property type="term" value="P:acetate biosynthetic process"/>
    <property type="evidence" value="ECO:0000315"/>
    <property type="project" value="AspGD"/>
</dbReference>
<dbReference type="GO" id="GO:0045991">
    <property type="term" value="P:carbon catabolite activation of transcription"/>
    <property type="evidence" value="ECO:0000315"/>
    <property type="project" value="AspGD"/>
</dbReference>
<dbReference type="GO" id="GO:0071470">
    <property type="term" value="P:cellular response to osmotic stress"/>
    <property type="evidence" value="ECO:0000270"/>
    <property type="project" value="AspGD"/>
</dbReference>
<dbReference type="GO" id="GO:0006068">
    <property type="term" value="P:ethanol catabolic process"/>
    <property type="evidence" value="ECO:0007669"/>
    <property type="project" value="UniProtKB-UniPathway"/>
</dbReference>
<dbReference type="GO" id="GO:0006067">
    <property type="term" value="P:ethanol metabolic process"/>
    <property type="evidence" value="ECO:0000315"/>
    <property type="project" value="AspGD"/>
</dbReference>
<dbReference type="GO" id="GO:0006567">
    <property type="term" value="P:threonine catabolic process"/>
    <property type="evidence" value="ECO:0000315"/>
    <property type="project" value="AspGD"/>
</dbReference>
<dbReference type="FunFam" id="3.40.605.10:FF:000050">
    <property type="entry name" value="Aldehyde dehydrogenase, mitochondrial"/>
    <property type="match status" value="1"/>
</dbReference>
<dbReference type="FunFam" id="3.40.605.10:FF:000026">
    <property type="entry name" value="Aldehyde dehydrogenase, putative"/>
    <property type="match status" value="1"/>
</dbReference>
<dbReference type="FunFam" id="3.40.309.10:FF:000001">
    <property type="entry name" value="Mitochondrial aldehyde dehydrogenase 2"/>
    <property type="match status" value="1"/>
</dbReference>
<dbReference type="Gene3D" id="3.40.605.10">
    <property type="entry name" value="Aldehyde Dehydrogenase, Chain A, domain 1"/>
    <property type="match status" value="1"/>
</dbReference>
<dbReference type="Gene3D" id="3.40.309.10">
    <property type="entry name" value="Aldehyde Dehydrogenase, Chain A, domain 2"/>
    <property type="match status" value="1"/>
</dbReference>
<dbReference type="InterPro" id="IPR016161">
    <property type="entry name" value="Ald_DH/histidinol_DH"/>
</dbReference>
<dbReference type="InterPro" id="IPR016163">
    <property type="entry name" value="Ald_DH_C"/>
</dbReference>
<dbReference type="InterPro" id="IPR016160">
    <property type="entry name" value="Ald_DH_CS_CYS"/>
</dbReference>
<dbReference type="InterPro" id="IPR029510">
    <property type="entry name" value="Ald_DH_CS_GLU"/>
</dbReference>
<dbReference type="InterPro" id="IPR016162">
    <property type="entry name" value="Ald_DH_N"/>
</dbReference>
<dbReference type="InterPro" id="IPR015590">
    <property type="entry name" value="Aldehyde_DH_dom"/>
</dbReference>
<dbReference type="PANTHER" id="PTHR11699">
    <property type="entry name" value="ALDEHYDE DEHYDROGENASE-RELATED"/>
    <property type="match status" value="1"/>
</dbReference>
<dbReference type="Pfam" id="PF00171">
    <property type="entry name" value="Aldedh"/>
    <property type="match status" value="1"/>
</dbReference>
<dbReference type="SUPFAM" id="SSF53720">
    <property type="entry name" value="ALDH-like"/>
    <property type="match status" value="1"/>
</dbReference>
<dbReference type="PROSITE" id="PS00070">
    <property type="entry name" value="ALDEHYDE_DEHYDR_CYS"/>
    <property type="match status" value="1"/>
</dbReference>
<dbReference type="PROSITE" id="PS00687">
    <property type="entry name" value="ALDEHYDE_DEHYDR_GLU"/>
    <property type="match status" value="1"/>
</dbReference>
<keyword id="KW-0520">NAD</keyword>
<keyword id="KW-0560">Oxidoreductase</keyword>
<keyword id="KW-1185">Reference proteome</keyword>
<proteinExistence type="inferred from homology"/>
<comment type="catalytic activity">
    <reaction>
        <text>an aldehyde + NAD(+) + H2O = a carboxylate + NADH + 2 H(+)</text>
        <dbReference type="Rhea" id="RHEA:16185"/>
        <dbReference type="ChEBI" id="CHEBI:15377"/>
        <dbReference type="ChEBI" id="CHEBI:15378"/>
        <dbReference type="ChEBI" id="CHEBI:17478"/>
        <dbReference type="ChEBI" id="CHEBI:29067"/>
        <dbReference type="ChEBI" id="CHEBI:57540"/>
        <dbReference type="ChEBI" id="CHEBI:57945"/>
        <dbReference type="EC" id="1.2.1.3"/>
    </reaction>
</comment>
<comment type="pathway">
    <text>Alcohol metabolism; ethanol degradation; acetate from ethanol: step 2/2.</text>
</comment>
<comment type="similarity">
    <text evidence="4">Belongs to the aldehyde dehydrogenase family.</text>
</comment>
<reference key="1">
    <citation type="journal article" date="1987" name="Gene">
        <title>Cloning and characterization of the aldA gene of Aspergillus nidulans.</title>
        <authorList>
            <person name="Pickett M."/>
            <person name="Gwynne D.I."/>
            <person name="Buxton F.P."/>
            <person name="Elliott R."/>
            <person name="Davies R.W."/>
            <person name="Lockington R.A."/>
            <person name="Scazzocchio C."/>
            <person name="Sealy-Lewis H.M."/>
        </authorList>
    </citation>
    <scope>NUCLEOTIDE SEQUENCE [GENOMIC DNA]</scope>
</reference>
<reference key="2">
    <citation type="journal article" date="2001" name="J. Biol. Chem.">
        <title>Regulation of the aldehyde dehydrogenase gene (aldA) and its role in the control of the coinducer level necessary for induction of the ethanol utilization pathway in Aspergillus nidulans.</title>
        <authorList>
            <person name="Flipphi M."/>
            <person name="Mathieu M."/>
            <person name="Cirpus I."/>
            <person name="Panozzo C."/>
            <person name="Felenbok B."/>
        </authorList>
    </citation>
    <scope>NUCLEOTIDE SEQUENCE [GENOMIC DNA]</scope>
</reference>
<reference key="3">
    <citation type="journal article" date="2005" name="Nature">
        <title>Sequencing of Aspergillus nidulans and comparative analysis with A. fumigatus and A. oryzae.</title>
        <authorList>
            <person name="Galagan J.E."/>
            <person name="Calvo S.E."/>
            <person name="Cuomo C."/>
            <person name="Ma L.-J."/>
            <person name="Wortman J.R."/>
            <person name="Batzoglou S."/>
            <person name="Lee S.-I."/>
            <person name="Bastuerkmen M."/>
            <person name="Spevak C.C."/>
            <person name="Clutterbuck J."/>
            <person name="Kapitonov V."/>
            <person name="Jurka J."/>
            <person name="Scazzocchio C."/>
            <person name="Farman M.L."/>
            <person name="Butler J."/>
            <person name="Purcell S."/>
            <person name="Harris S."/>
            <person name="Braus G.H."/>
            <person name="Draht O."/>
            <person name="Busch S."/>
            <person name="D'Enfert C."/>
            <person name="Bouchier C."/>
            <person name="Goldman G.H."/>
            <person name="Bell-Pedersen D."/>
            <person name="Griffiths-Jones S."/>
            <person name="Doonan J.H."/>
            <person name="Yu J."/>
            <person name="Vienken K."/>
            <person name="Pain A."/>
            <person name="Freitag M."/>
            <person name="Selker E.U."/>
            <person name="Archer D.B."/>
            <person name="Penalva M.A."/>
            <person name="Oakley B.R."/>
            <person name="Momany M."/>
            <person name="Tanaka T."/>
            <person name="Kumagai T."/>
            <person name="Asai K."/>
            <person name="Machida M."/>
            <person name="Nierman W.C."/>
            <person name="Denning D.W."/>
            <person name="Caddick M.X."/>
            <person name="Hynes M."/>
            <person name="Paoletti M."/>
            <person name="Fischer R."/>
            <person name="Miller B.L."/>
            <person name="Dyer P.S."/>
            <person name="Sachs M.S."/>
            <person name="Osmani S.A."/>
            <person name="Birren B.W."/>
        </authorList>
    </citation>
    <scope>NUCLEOTIDE SEQUENCE [LARGE SCALE GENOMIC DNA]</scope>
    <source>
        <strain>FGSC A4 / ATCC 38163 / CBS 112.46 / NRRL 194 / M139</strain>
    </source>
</reference>
<reference key="4">
    <citation type="journal article" date="2009" name="Fungal Genet. Biol.">
        <title>The 2008 update of the Aspergillus nidulans genome annotation: a community effort.</title>
        <authorList>
            <person name="Wortman J.R."/>
            <person name="Gilsenan J.M."/>
            <person name="Joardar V."/>
            <person name="Deegan J."/>
            <person name="Clutterbuck J."/>
            <person name="Andersen M.R."/>
            <person name="Archer D."/>
            <person name="Bencina M."/>
            <person name="Braus G."/>
            <person name="Coutinho P."/>
            <person name="von Dohren H."/>
            <person name="Doonan J."/>
            <person name="Driessen A.J."/>
            <person name="Durek P."/>
            <person name="Espeso E."/>
            <person name="Fekete E."/>
            <person name="Flipphi M."/>
            <person name="Estrada C.G."/>
            <person name="Geysens S."/>
            <person name="Goldman G."/>
            <person name="de Groot P.W."/>
            <person name="Hansen K."/>
            <person name="Harris S.D."/>
            <person name="Heinekamp T."/>
            <person name="Helmstaedt K."/>
            <person name="Henrissat B."/>
            <person name="Hofmann G."/>
            <person name="Homan T."/>
            <person name="Horio T."/>
            <person name="Horiuchi H."/>
            <person name="James S."/>
            <person name="Jones M."/>
            <person name="Karaffa L."/>
            <person name="Karanyi Z."/>
            <person name="Kato M."/>
            <person name="Keller N."/>
            <person name="Kelly D.E."/>
            <person name="Kiel J.A."/>
            <person name="Kim J.M."/>
            <person name="van der Klei I.J."/>
            <person name="Klis F.M."/>
            <person name="Kovalchuk A."/>
            <person name="Krasevec N."/>
            <person name="Kubicek C.P."/>
            <person name="Liu B."/>
            <person name="Maccabe A."/>
            <person name="Meyer V."/>
            <person name="Mirabito P."/>
            <person name="Miskei M."/>
            <person name="Mos M."/>
            <person name="Mullins J."/>
            <person name="Nelson D.R."/>
            <person name="Nielsen J."/>
            <person name="Oakley B.R."/>
            <person name="Osmani S.A."/>
            <person name="Pakula T."/>
            <person name="Paszewski A."/>
            <person name="Paulsen I."/>
            <person name="Pilsyk S."/>
            <person name="Pocsi I."/>
            <person name="Punt P.J."/>
            <person name="Ram A.F."/>
            <person name="Ren Q."/>
            <person name="Robellet X."/>
            <person name="Robson G."/>
            <person name="Seiboth B."/>
            <person name="van Solingen P."/>
            <person name="Specht T."/>
            <person name="Sun J."/>
            <person name="Taheri-Talesh N."/>
            <person name="Takeshita N."/>
            <person name="Ussery D."/>
            <person name="vanKuyk P.A."/>
            <person name="Visser H."/>
            <person name="van de Vondervoort P.J."/>
            <person name="de Vries R.P."/>
            <person name="Walton J."/>
            <person name="Xiang X."/>
            <person name="Xiong Y."/>
            <person name="Zeng A.P."/>
            <person name="Brandt B.W."/>
            <person name="Cornell M.J."/>
            <person name="van den Hondel C.A."/>
            <person name="Visser J."/>
            <person name="Oliver S.G."/>
            <person name="Turner G."/>
        </authorList>
    </citation>
    <scope>GENOME REANNOTATION</scope>
    <source>
        <strain>FGSC A4 / ATCC 38163 / CBS 112.46 / NRRL 194 / M139</strain>
    </source>
</reference>
<gene>
    <name type="primary">aldA</name>
    <name type="synonym">aspA</name>
    <name type="ORF">AN0554</name>
</gene>